<name>CYSP4_VASCU</name>
<sequence>YPESIDWRKKGAVTPVKNQGSCGSCWAFSTIVTVEGINKIRTG</sequence>
<comment type="similarity">
    <text evidence="3 4 5">Belongs to the peptidase C1 family.</text>
</comment>
<protein>
    <recommendedName>
        <fullName>Cysteine proteinase 4</fullName>
        <ecNumber evidence="1">3.4.22.-</ecNumber>
    </recommendedName>
    <alternativeName>
        <fullName>CC-IV</fullName>
    </alternativeName>
    <alternativeName>
        <fullName>Cysteine proteinase IV</fullName>
    </alternativeName>
</protein>
<feature type="signal peptide" evidence="2">
    <location>
        <begin position="1"/>
        <end status="unknown"/>
    </location>
</feature>
<feature type="chain" id="PRO_0000050567" description="Cysteine proteinase 4">
    <location>
        <begin status="unknown"/>
        <end position="43" status="greater than"/>
    </location>
</feature>
<feature type="active site" evidence="3">
    <location>
        <position position="25"/>
    </location>
</feature>
<feature type="non-terminal residue">
    <location>
        <position position="43"/>
    </location>
</feature>
<accession>P32957</accession>
<keyword id="KW-0903">Direct protein sequencing</keyword>
<keyword id="KW-0378">Hydrolase</keyword>
<keyword id="KW-0645">Protease</keyword>
<keyword id="KW-0732">Signal</keyword>
<keyword id="KW-0788">Thiol protease</keyword>
<proteinExistence type="evidence at protein level"/>
<evidence type="ECO:0000250" key="1">
    <source>
        <dbReference type="UniProtKB" id="P80884"/>
    </source>
</evidence>
<evidence type="ECO:0000255" key="2"/>
<evidence type="ECO:0000255" key="3">
    <source>
        <dbReference type="PROSITE-ProRule" id="PRU10088"/>
    </source>
</evidence>
<evidence type="ECO:0000255" key="4">
    <source>
        <dbReference type="PROSITE-ProRule" id="PRU10089"/>
    </source>
</evidence>
<evidence type="ECO:0000255" key="5">
    <source>
        <dbReference type="PROSITE-ProRule" id="PRU10090"/>
    </source>
</evidence>
<reference key="1">
    <citation type="journal article" date="1993" name="Biol. Chem. Hoppe-Seyler">
        <title>Isolation and preliminary characterization of the cysteine-proteinases from the latex of Carica candamarcensis Hook.</title>
        <authorList>
            <person name="Walreavens V."/>
            <person name="Jaziri M."/>
            <person name="van Beeumen J."/>
            <person name="Schnek A.G."/>
            <person name="Kleinschmidt T."/>
            <person name="Looze Y."/>
        </authorList>
    </citation>
    <scope>PROTEIN SEQUENCE</scope>
    <source>
        <tissue>Latex</tissue>
    </source>
</reference>
<organism>
    <name type="scientific">Vasconcellea cundinamarcensis</name>
    <name type="common">Mountain papaya</name>
    <name type="synonym">Carica candamarcensis</name>
    <dbReference type="NCBI Taxonomy" id="35926"/>
    <lineage>
        <taxon>Eukaryota</taxon>
        <taxon>Viridiplantae</taxon>
        <taxon>Streptophyta</taxon>
        <taxon>Embryophyta</taxon>
        <taxon>Tracheophyta</taxon>
        <taxon>Spermatophyta</taxon>
        <taxon>Magnoliopsida</taxon>
        <taxon>eudicotyledons</taxon>
        <taxon>Gunneridae</taxon>
        <taxon>Pentapetalae</taxon>
        <taxon>rosids</taxon>
        <taxon>malvids</taxon>
        <taxon>Brassicales</taxon>
        <taxon>Caricaceae</taxon>
        <taxon>Vasconcellea</taxon>
    </lineage>
</organism>
<dbReference type="EC" id="3.4.22.-" evidence="1"/>
<dbReference type="SMR" id="P32957"/>
<dbReference type="MEROPS" id="C01.022"/>
<dbReference type="GO" id="GO:0008234">
    <property type="term" value="F:cysteine-type peptidase activity"/>
    <property type="evidence" value="ECO:0007669"/>
    <property type="project" value="UniProtKB-KW"/>
</dbReference>
<dbReference type="GO" id="GO:0006508">
    <property type="term" value="P:proteolysis"/>
    <property type="evidence" value="ECO:0007669"/>
    <property type="project" value="UniProtKB-KW"/>
</dbReference>
<dbReference type="Gene3D" id="3.90.70.10">
    <property type="entry name" value="Cysteine proteinases"/>
    <property type="match status" value="1"/>
</dbReference>
<dbReference type="InterPro" id="IPR038765">
    <property type="entry name" value="Papain-like_cys_pep_sf"/>
</dbReference>
<dbReference type="InterPro" id="IPR000169">
    <property type="entry name" value="Pept_cys_AS"/>
</dbReference>
<dbReference type="InterPro" id="IPR013128">
    <property type="entry name" value="Peptidase_C1A"/>
</dbReference>
<dbReference type="InterPro" id="IPR000668">
    <property type="entry name" value="Peptidase_C1A_C"/>
</dbReference>
<dbReference type="PANTHER" id="PTHR12411">
    <property type="entry name" value="CYSTEINE PROTEASE FAMILY C1-RELATED"/>
    <property type="match status" value="1"/>
</dbReference>
<dbReference type="Pfam" id="PF00112">
    <property type="entry name" value="Peptidase_C1"/>
    <property type="match status" value="1"/>
</dbReference>
<dbReference type="SUPFAM" id="SSF54001">
    <property type="entry name" value="Cysteine proteinases"/>
    <property type="match status" value="1"/>
</dbReference>
<dbReference type="PROSITE" id="PS00139">
    <property type="entry name" value="THIOL_PROTEASE_CYS"/>
    <property type="match status" value="1"/>
</dbReference>